<gene>
    <name type="ordered locus">SPD_0180</name>
</gene>
<proteinExistence type="inferred from homology"/>
<dbReference type="EMBL" id="CP000410">
    <property type="protein sequence ID" value="ABJ54656.1"/>
    <property type="molecule type" value="Genomic_DNA"/>
</dbReference>
<dbReference type="RefSeq" id="WP_000507059.1">
    <property type="nucleotide sequence ID" value="NZ_JAMLJR010000002.1"/>
</dbReference>
<dbReference type="SMR" id="Q04MP9"/>
<dbReference type="PaxDb" id="373153-SPD_0180"/>
<dbReference type="KEGG" id="spd:SPD_0180"/>
<dbReference type="eggNOG" id="COG4472">
    <property type="taxonomic scope" value="Bacteria"/>
</dbReference>
<dbReference type="HOGENOM" id="CLU_162466_0_0_9"/>
<dbReference type="BioCyc" id="SPNE373153:G1G6V-201-MONOMER"/>
<dbReference type="Proteomes" id="UP000001452">
    <property type="component" value="Chromosome"/>
</dbReference>
<dbReference type="HAMAP" id="MF_01507">
    <property type="entry name" value="UPF0297"/>
    <property type="match status" value="1"/>
</dbReference>
<dbReference type="InterPro" id="IPR009309">
    <property type="entry name" value="IreB"/>
</dbReference>
<dbReference type="NCBIfam" id="NF003997">
    <property type="entry name" value="PRK05473.1"/>
    <property type="match status" value="1"/>
</dbReference>
<dbReference type="PANTHER" id="PTHR40067">
    <property type="entry name" value="UPF0297 PROTEIN YRZL"/>
    <property type="match status" value="1"/>
</dbReference>
<dbReference type="PANTHER" id="PTHR40067:SF1">
    <property type="entry name" value="UPF0297 PROTEIN YRZL"/>
    <property type="match status" value="1"/>
</dbReference>
<dbReference type="Pfam" id="PF06135">
    <property type="entry name" value="IreB"/>
    <property type="match status" value="1"/>
</dbReference>
<dbReference type="PIRSF" id="PIRSF037258">
    <property type="entry name" value="DUF965_bac"/>
    <property type="match status" value="1"/>
</dbReference>
<comment type="similarity">
    <text evidence="1">Belongs to the UPF0297 family.</text>
</comment>
<accession>Q04MP9</accession>
<evidence type="ECO:0000255" key="1">
    <source>
        <dbReference type="HAMAP-Rule" id="MF_01507"/>
    </source>
</evidence>
<feature type="chain" id="PRO_0000289311" description="UPF0297 protein SPD_0180">
    <location>
        <begin position="1"/>
        <end position="88"/>
    </location>
</feature>
<protein>
    <recommendedName>
        <fullName evidence="1">UPF0297 protein SPD_0180</fullName>
    </recommendedName>
</protein>
<reference key="1">
    <citation type="journal article" date="2007" name="J. Bacteriol.">
        <title>Genome sequence of Avery's virulent serotype 2 strain D39 of Streptococcus pneumoniae and comparison with that of unencapsulated laboratory strain R6.</title>
        <authorList>
            <person name="Lanie J.A."/>
            <person name="Ng W.-L."/>
            <person name="Kazmierczak K.M."/>
            <person name="Andrzejewski T.M."/>
            <person name="Davidsen T.M."/>
            <person name="Wayne K.J."/>
            <person name="Tettelin H."/>
            <person name="Glass J.I."/>
            <person name="Winkler M.E."/>
        </authorList>
    </citation>
    <scope>NUCLEOTIDE SEQUENCE [LARGE SCALE GENOMIC DNA]</scope>
    <source>
        <strain>D39 / NCTC 7466</strain>
    </source>
</reference>
<organism>
    <name type="scientific">Streptococcus pneumoniae serotype 2 (strain D39 / NCTC 7466)</name>
    <dbReference type="NCBI Taxonomy" id="373153"/>
    <lineage>
        <taxon>Bacteria</taxon>
        <taxon>Bacillati</taxon>
        <taxon>Bacillota</taxon>
        <taxon>Bacilli</taxon>
        <taxon>Lactobacillales</taxon>
        <taxon>Streptococcaceae</taxon>
        <taxon>Streptococcus</taxon>
    </lineage>
</organism>
<name>Y180_STRP2</name>
<keyword id="KW-1185">Reference proteome</keyword>
<sequence length="88" mass="10227">MGFTEETVRFKLDDSNKKEISETLTDVYASLNDKGYNPINQIVGYVLSGDPAYVPRYNNARNQIRKYERDEIVEELVRYYLKGQGVDL</sequence>